<organism>
    <name type="scientific">Streptomyces coelicolor (strain ATCC BAA-471 / A3(2) / M145)</name>
    <dbReference type="NCBI Taxonomy" id="100226"/>
    <lineage>
        <taxon>Bacteria</taxon>
        <taxon>Bacillati</taxon>
        <taxon>Actinomycetota</taxon>
        <taxon>Actinomycetes</taxon>
        <taxon>Kitasatosporales</taxon>
        <taxon>Streptomycetaceae</taxon>
        <taxon>Streptomyces</taxon>
        <taxon>Streptomyces albidoflavus group</taxon>
    </lineage>
</organism>
<gene>
    <name evidence="1" type="primary">cobB</name>
    <name type="ordered locus">SCO1852</name>
    <name type="ORF">SCI8.37</name>
</gene>
<sequence length="486" mass="50069">MTSSDSGSAVPRLVIAAPSSGSGKTTVATGLMAALTARGLAVSPHKVGPDYIDPGYHALATGRVGRNLDAYLCGPELVGPLFLHGARGCDIAVVEGVMGLYDGAAGEGELASTAQVAKLLRAPVVLVVDASSQSRSVAALVHGFVSWDPEVRIGGVILNKVASDRHEALLREAVDSVGVPVLGVLRRAAPVETPSRHLGLVPVAERGSDAVDAVAAMGARVADGCDLEALVGLARSTGALSCAAWDAGEALVSSPPPPLPVPSPGAAPPDPLVRPGRPRPQAPDGLRRRVAMASGAAFTFSYAEHTELLAAAGAEVVTFDPLRDEELPEGTQGLVIGGGFPEVYASELSANEGLRKSVAELAFSGAPVAAECAGLLYLCRELDGLPMCGVLDAAARMSKRLTLGYRDAVAVSDSALAVAGTRMRGHEFHRTVVEPGAGAAPAWGMRAPERRVEGFVERGVHASYLHTHWAAEPGVARRFVERCRTS</sequence>
<evidence type="ECO:0000255" key="1">
    <source>
        <dbReference type="HAMAP-Rule" id="MF_00027"/>
    </source>
</evidence>
<evidence type="ECO:0000256" key="2">
    <source>
        <dbReference type="SAM" id="MobiDB-lite"/>
    </source>
</evidence>
<protein>
    <recommendedName>
        <fullName evidence="1">Hydrogenobyrinate a,c-diamide synthase</fullName>
        <ecNumber evidence="1">6.3.5.9</ecNumber>
    </recommendedName>
    <alternativeName>
        <fullName evidence="1">Hydrogenobyrinic acid a,c-diamide synthase</fullName>
    </alternativeName>
</protein>
<dbReference type="EC" id="6.3.5.9" evidence="1"/>
<dbReference type="EMBL" id="AL939110">
    <property type="protein sequence ID" value="CAB59468.1"/>
    <property type="molecule type" value="Genomic_DNA"/>
</dbReference>
<dbReference type="RefSeq" id="NP_626120.1">
    <property type="nucleotide sequence ID" value="NC_003888.3"/>
</dbReference>
<dbReference type="RefSeq" id="WP_011028009.1">
    <property type="nucleotide sequence ID" value="NZ_VNID01000001.1"/>
</dbReference>
<dbReference type="SMR" id="Q9RJ16"/>
<dbReference type="FunCoup" id="Q9RJ16">
    <property type="interactions" value="114"/>
</dbReference>
<dbReference type="STRING" id="100226.gene:17759449"/>
<dbReference type="PaxDb" id="100226-SCO1852"/>
<dbReference type="KEGG" id="sco:SCO1852"/>
<dbReference type="PATRIC" id="fig|100226.15.peg.1876"/>
<dbReference type="eggNOG" id="COG1797">
    <property type="taxonomic scope" value="Bacteria"/>
</dbReference>
<dbReference type="HOGENOM" id="CLU_022752_1_1_11"/>
<dbReference type="InParanoid" id="Q9RJ16"/>
<dbReference type="OrthoDB" id="9764035at2"/>
<dbReference type="PhylomeDB" id="Q9RJ16"/>
<dbReference type="UniPathway" id="UPA00148">
    <property type="reaction ID" value="UER00220"/>
</dbReference>
<dbReference type="Proteomes" id="UP000001973">
    <property type="component" value="Chromosome"/>
</dbReference>
<dbReference type="GO" id="GO:0005524">
    <property type="term" value="F:ATP binding"/>
    <property type="evidence" value="ECO:0007669"/>
    <property type="project" value="UniProtKB-UniRule"/>
</dbReference>
<dbReference type="GO" id="GO:0042242">
    <property type="term" value="F:cobyrinic acid a,c-diamide synthase activity"/>
    <property type="evidence" value="ECO:0007669"/>
    <property type="project" value="InterPro"/>
</dbReference>
<dbReference type="GO" id="GO:0043802">
    <property type="term" value="F:hydrogenobyrinic acid a,c-diamide synthase (glutamine-hydrolysing) activity"/>
    <property type="evidence" value="ECO:0007669"/>
    <property type="project" value="UniProtKB-UniRule"/>
</dbReference>
<dbReference type="GO" id="GO:0009236">
    <property type="term" value="P:cobalamin biosynthetic process"/>
    <property type="evidence" value="ECO:0007669"/>
    <property type="project" value="UniProtKB-UniRule"/>
</dbReference>
<dbReference type="CDD" id="cd05388">
    <property type="entry name" value="CobB_N"/>
    <property type="match status" value="1"/>
</dbReference>
<dbReference type="CDD" id="cd03130">
    <property type="entry name" value="GATase1_CobB"/>
    <property type="match status" value="1"/>
</dbReference>
<dbReference type="Gene3D" id="3.40.50.880">
    <property type="match status" value="1"/>
</dbReference>
<dbReference type="Gene3D" id="3.40.50.300">
    <property type="entry name" value="P-loop containing nucleotide triphosphate hydrolases"/>
    <property type="match status" value="1"/>
</dbReference>
<dbReference type="HAMAP" id="MF_00027">
    <property type="entry name" value="CobB_CbiA"/>
    <property type="match status" value="1"/>
</dbReference>
<dbReference type="InterPro" id="IPR004484">
    <property type="entry name" value="CbiA/CobB_synth"/>
</dbReference>
<dbReference type="InterPro" id="IPR029062">
    <property type="entry name" value="Class_I_gatase-like"/>
</dbReference>
<dbReference type="InterPro" id="IPR002586">
    <property type="entry name" value="CobQ/CobB/MinD/ParA_Nub-bd_dom"/>
</dbReference>
<dbReference type="InterPro" id="IPR011698">
    <property type="entry name" value="GATase_3"/>
</dbReference>
<dbReference type="InterPro" id="IPR027417">
    <property type="entry name" value="P-loop_NTPase"/>
</dbReference>
<dbReference type="NCBIfam" id="NF002204">
    <property type="entry name" value="PRK01077.1"/>
    <property type="match status" value="1"/>
</dbReference>
<dbReference type="PANTHER" id="PTHR43873">
    <property type="entry name" value="COBYRINATE A,C-DIAMIDE SYNTHASE"/>
    <property type="match status" value="1"/>
</dbReference>
<dbReference type="PANTHER" id="PTHR43873:SF1">
    <property type="entry name" value="COBYRINATE A,C-DIAMIDE SYNTHASE"/>
    <property type="match status" value="1"/>
</dbReference>
<dbReference type="Pfam" id="PF01656">
    <property type="entry name" value="CbiA"/>
    <property type="match status" value="1"/>
</dbReference>
<dbReference type="Pfam" id="PF07685">
    <property type="entry name" value="GATase_3"/>
    <property type="match status" value="1"/>
</dbReference>
<dbReference type="SUPFAM" id="SSF52317">
    <property type="entry name" value="Class I glutamine amidotransferase-like"/>
    <property type="match status" value="1"/>
</dbReference>
<dbReference type="SUPFAM" id="SSF52540">
    <property type="entry name" value="P-loop containing nucleoside triphosphate hydrolases"/>
    <property type="match status" value="1"/>
</dbReference>
<dbReference type="PROSITE" id="PS51274">
    <property type="entry name" value="GATASE_COBBQ"/>
    <property type="match status" value="1"/>
</dbReference>
<accession>Q9RJ16</accession>
<proteinExistence type="inferred from homology"/>
<feature type="chain" id="PRO_0000141270" description="Hydrogenobyrinate a,c-diamide synthase">
    <location>
        <begin position="1"/>
        <end position="486"/>
    </location>
</feature>
<feature type="domain" description="GATase cobBQ-type" evidence="1">
    <location>
        <begin position="289"/>
        <end position="474"/>
    </location>
</feature>
<feature type="region of interest" description="Disordered" evidence="2">
    <location>
        <begin position="254"/>
        <end position="284"/>
    </location>
</feature>
<feature type="compositionally biased region" description="Pro residues" evidence="2">
    <location>
        <begin position="254"/>
        <end position="272"/>
    </location>
</feature>
<feature type="active site" description="Nucleophile" evidence="1">
    <location>
        <position position="372"/>
    </location>
</feature>
<feature type="site" description="Increases nucleophilicity of active site Cys" evidence="1">
    <location>
        <position position="466"/>
    </location>
</feature>
<comment type="function">
    <text evidence="1">Catalyzes the ATP-dependent amidation of the two carboxylate groups at positions a and c of hydrogenobyrinate, using either L-glutamine or ammonia as the nitrogen source.</text>
</comment>
<comment type="catalytic activity">
    <reaction evidence="1">
        <text>hydrogenobyrinate + 2 L-glutamine + 2 ATP + 2 H2O = hydrogenobyrinate a,c-diamide + 2 L-glutamate + 2 ADP + 2 phosphate + 2 H(+)</text>
        <dbReference type="Rhea" id="RHEA:12544"/>
        <dbReference type="ChEBI" id="CHEBI:15377"/>
        <dbReference type="ChEBI" id="CHEBI:15378"/>
        <dbReference type="ChEBI" id="CHEBI:29985"/>
        <dbReference type="ChEBI" id="CHEBI:30616"/>
        <dbReference type="ChEBI" id="CHEBI:43474"/>
        <dbReference type="ChEBI" id="CHEBI:58359"/>
        <dbReference type="ChEBI" id="CHEBI:77873"/>
        <dbReference type="ChEBI" id="CHEBI:77874"/>
        <dbReference type="ChEBI" id="CHEBI:456216"/>
        <dbReference type="EC" id="6.3.5.9"/>
    </reaction>
</comment>
<comment type="cofactor">
    <cofactor evidence="1">
        <name>Mg(2+)</name>
        <dbReference type="ChEBI" id="CHEBI:18420"/>
    </cofactor>
</comment>
<comment type="pathway">
    <text evidence="1">Cofactor biosynthesis; adenosylcobalamin biosynthesis; cob(II)yrinate a,c-diamide from precorrin-2 (aerobic route): step 9/10.</text>
</comment>
<comment type="domain">
    <text evidence="1">Comprises of two domains. The C-terminal domain contains the binding site for glutamine and catalyzes the hydrolysis of this substrate to glutamate and ammonia. The N-terminal domain is anticipated to bind ATP and hydrogenobyrinate and catalyzes the ultimate synthesis of the diamide product. The ammonia produced via the glutaminase domain is probably translocated to the adjacent domain via a molecular tunnel, where it reacts with an activated intermediate.</text>
</comment>
<comment type="miscellaneous">
    <text evidence="1">The a and c carboxylates of hydrogenobyrinate are activated for nucleophilic attack via formation of a phosphorylated intermediate by ATP. CobB catalyzes first the amidation of the c-carboxylate, and then that of the a-carboxylate.</text>
</comment>
<comment type="similarity">
    <text evidence="1">Belongs to the CobB/CbiA family.</text>
</comment>
<reference key="1">
    <citation type="journal article" date="2002" name="Nature">
        <title>Complete genome sequence of the model actinomycete Streptomyces coelicolor A3(2).</title>
        <authorList>
            <person name="Bentley S.D."/>
            <person name="Chater K.F."/>
            <person name="Cerdeno-Tarraga A.-M."/>
            <person name="Challis G.L."/>
            <person name="Thomson N.R."/>
            <person name="James K.D."/>
            <person name="Harris D.E."/>
            <person name="Quail M.A."/>
            <person name="Kieser H."/>
            <person name="Harper D."/>
            <person name="Bateman A."/>
            <person name="Brown S."/>
            <person name="Chandra G."/>
            <person name="Chen C.W."/>
            <person name="Collins M."/>
            <person name="Cronin A."/>
            <person name="Fraser A."/>
            <person name="Goble A."/>
            <person name="Hidalgo J."/>
            <person name="Hornsby T."/>
            <person name="Howarth S."/>
            <person name="Huang C.-H."/>
            <person name="Kieser T."/>
            <person name="Larke L."/>
            <person name="Murphy L.D."/>
            <person name="Oliver K."/>
            <person name="O'Neil S."/>
            <person name="Rabbinowitsch E."/>
            <person name="Rajandream M.A."/>
            <person name="Rutherford K.M."/>
            <person name="Rutter S."/>
            <person name="Seeger K."/>
            <person name="Saunders D."/>
            <person name="Sharp S."/>
            <person name="Squares R."/>
            <person name="Squares S."/>
            <person name="Taylor K."/>
            <person name="Warren T."/>
            <person name="Wietzorrek A."/>
            <person name="Woodward J.R."/>
            <person name="Barrell B.G."/>
            <person name="Parkhill J."/>
            <person name="Hopwood D.A."/>
        </authorList>
    </citation>
    <scope>NUCLEOTIDE SEQUENCE [LARGE SCALE GENOMIC DNA]</scope>
    <source>
        <strain>ATCC BAA-471 / A3(2) / M145</strain>
    </source>
</reference>
<name>COBB_STRCO</name>
<keyword id="KW-0067">ATP-binding</keyword>
<keyword id="KW-0169">Cobalamin biosynthesis</keyword>
<keyword id="KW-0315">Glutamine amidotransferase</keyword>
<keyword id="KW-0436">Ligase</keyword>
<keyword id="KW-0460">Magnesium</keyword>
<keyword id="KW-0547">Nucleotide-binding</keyword>
<keyword id="KW-1185">Reference proteome</keyword>